<dbReference type="EC" id="6.3.4.21" evidence="1"/>
<dbReference type="EMBL" id="BX571865">
    <property type="protein sequence ID" value="CAE14047.1"/>
    <property type="molecule type" value="Genomic_DNA"/>
</dbReference>
<dbReference type="RefSeq" id="WP_011146033.1">
    <property type="nucleotide sequence ID" value="NC_005126.1"/>
</dbReference>
<dbReference type="SMR" id="Q7N621"/>
<dbReference type="STRING" id="243265.plu1754"/>
<dbReference type="GeneID" id="48848037"/>
<dbReference type="KEGG" id="plu:plu1754"/>
<dbReference type="eggNOG" id="COG1488">
    <property type="taxonomic scope" value="Bacteria"/>
</dbReference>
<dbReference type="HOGENOM" id="CLU_030991_1_0_6"/>
<dbReference type="OrthoDB" id="9771406at2"/>
<dbReference type="UniPathway" id="UPA00253">
    <property type="reaction ID" value="UER00457"/>
</dbReference>
<dbReference type="Proteomes" id="UP000002514">
    <property type="component" value="Chromosome"/>
</dbReference>
<dbReference type="GO" id="GO:0005829">
    <property type="term" value="C:cytosol"/>
    <property type="evidence" value="ECO:0007669"/>
    <property type="project" value="TreeGrafter"/>
</dbReference>
<dbReference type="GO" id="GO:0004516">
    <property type="term" value="F:nicotinate phosphoribosyltransferase activity"/>
    <property type="evidence" value="ECO:0007669"/>
    <property type="project" value="UniProtKB-UniRule"/>
</dbReference>
<dbReference type="GO" id="GO:0034355">
    <property type="term" value="P:NAD biosynthetic process via the salvage pathway"/>
    <property type="evidence" value="ECO:0007669"/>
    <property type="project" value="TreeGrafter"/>
</dbReference>
<dbReference type="CDD" id="cd01401">
    <property type="entry name" value="PncB_like"/>
    <property type="match status" value="1"/>
</dbReference>
<dbReference type="FunFam" id="3.20.140.10:FF:000001">
    <property type="entry name" value="Nicotinate phosphoribosyltransferase"/>
    <property type="match status" value="1"/>
</dbReference>
<dbReference type="Gene3D" id="3.20.140.10">
    <property type="entry name" value="nicotinate phosphoribosyltransferase"/>
    <property type="match status" value="1"/>
</dbReference>
<dbReference type="HAMAP" id="MF_00570">
    <property type="entry name" value="NAPRTase"/>
    <property type="match status" value="1"/>
</dbReference>
<dbReference type="InterPro" id="IPR041525">
    <property type="entry name" value="N/Namide_PRibTrfase"/>
</dbReference>
<dbReference type="InterPro" id="IPR040727">
    <property type="entry name" value="NAPRTase_N"/>
</dbReference>
<dbReference type="InterPro" id="IPR006406">
    <property type="entry name" value="Nic_PRibTrfase"/>
</dbReference>
<dbReference type="InterPro" id="IPR007229">
    <property type="entry name" value="Nic_PRibTrfase-Fam"/>
</dbReference>
<dbReference type="InterPro" id="IPR036068">
    <property type="entry name" value="Nicotinate_pribotase-like_C"/>
</dbReference>
<dbReference type="NCBIfam" id="TIGR01514">
    <property type="entry name" value="NAPRTase"/>
    <property type="match status" value="1"/>
</dbReference>
<dbReference type="NCBIfam" id="NF003704">
    <property type="entry name" value="PRK05321.1"/>
    <property type="match status" value="1"/>
</dbReference>
<dbReference type="PANTHER" id="PTHR11098">
    <property type="entry name" value="NICOTINATE PHOSPHORIBOSYLTRANSFERASE"/>
    <property type="match status" value="1"/>
</dbReference>
<dbReference type="PANTHER" id="PTHR11098:SF1">
    <property type="entry name" value="NICOTINATE PHOSPHORIBOSYLTRANSFERASE"/>
    <property type="match status" value="1"/>
</dbReference>
<dbReference type="Pfam" id="PF04095">
    <property type="entry name" value="NAPRTase"/>
    <property type="match status" value="1"/>
</dbReference>
<dbReference type="Pfam" id="PF17767">
    <property type="entry name" value="NAPRTase_N"/>
    <property type="match status" value="1"/>
</dbReference>
<dbReference type="PIRSF" id="PIRSF000484">
    <property type="entry name" value="NAPRT"/>
    <property type="match status" value="1"/>
</dbReference>
<dbReference type="SUPFAM" id="SSF51690">
    <property type="entry name" value="Nicotinate/Quinolinate PRTase C-terminal domain-like"/>
    <property type="match status" value="1"/>
</dbReference>
<dbReference type="SUPFAM" id="SSF54675">
    <property type="entry name" value="Nicotinate/Quinolinate PRTase N-terminal domain-like"/>
    <property type="match status" value="1"/>
</dbReference>
<keyword id="KW-0436">Ligase</keyword>
<keyword id="KW-0597">Phosphoprotein</keyword>
<keyword id="KW-0662">Pyridine nucleotide biosynthesis</keyword>
<keyword id="KW-1185">Reference proteome</keyword>
<comment type="function">
    <text evidence="1">Catalyzes the synthesis of beta-nicotinate D-ribonucleotide from nicotinate and 5-phospho-D-ribose 1-phosphate at the expense of ATP.</text>
</comment>
<comment type="catalytic activity">
    <reaction evidence="1">
        <text>nicotinate + 5-phospho-alpha-D-ribose 1-diphosphate + ATP + H2O = nicotinate beta-D-ribonucleotide + ADP + phosphate + diphosphate</text>
        <dbReference type="Rhea" id="RHEA:36163"/>
        <dbReference type="ChEBI" id="CHEBI:15377"/>
        <dbReference type="ChEBI" id="CHEBI:30616"/>
        <dbReference type="ChEBI" id="CHEBI:32544"/>
        <dbReference type="ChEBI" id="CHEBI:33019"/>
        <dbReference type="ChEBI" id="CHEBI:43474"/>
        <dbReference type="ChEBI" id="CHEBI:57502"/>
        <dbReference type="ChEBI" id="CHEBI:58017"/>
        <dbReference type="ChEBI" id="CHEBI:456216"/>
        <dbReference type="EC" id="6.3.4.21"/>
    </reaction>
</comment>
<comment type="pathway">
    <text evidence="1">Cofactor biosynthesis; NAD(+) biosynthesis; nicotinate D-ribonucleotide from nicotinate: step 1/1.</text>
</comment>
<comment type="PTM">
    <text evidence="1">Transiently phosphorylated on a His residue during the reaction cycle. Phosphorylation strongly increases the affinity for substrates and increases the rate of nicotinate D-ribonucleotide production. Dephosphorylation regenerates the low-affinity form of the enzyme, leading to product release.</text>
</comment>
<comment type="similarity">
    <text evidence="1">Belongs to the NAPRTase family.</text>
</comment>
<protein>
    <recommendedName>
        <fullName evidence="1">Nicotinate phosphoribosyltransferase</fullName>
        <shortName evidence="1">NAPRTase</shortName>
        <ecNumber evidence="1">6.3.4.21</ecNumber>
    </recommendedName>
</protein>
<sequence>MTLDATPIIKSLLDTDAYKLHMQQAVYHRYSHMPVVAEFRCRGDELLGEYATELRHQVNMMADLALTDAEFNYLSSLPFFKADYLDWLKTFRFNPQQVNISVTNGGQLAIHISGLWYEVIMWEVPLLALISELIHRHHSPDNTVENAVNQLRKLIKLFYQHAENEGIDLSSFKLMDFGTRRRFSHRVQHAVVSELQQHFPYLIGTSNYQLAQQLGLPPVGTQAHEWFQAHQQISPDLASSQREALQSWLKEYPNQLGIALTDCITMDAFLRDFDAQFAKNYQGLRHDSGDPVQWGEKAIAHYQKLGIDPMTKTLVFSDSLDFQKALALYRHFHNRINLIFGIGTQLTCNIPGVKPLNIVIKLVECNGKPVAKLSDSPGKTICEDNEFVNRLRAAFDIPQVKQAC</sequence>
<gene>
    <name evidence="1" type="primary">pncB</name>
    <name type="ordered locus">plu1754</name>
</gene>
<feature type="chain" id="PRO_0000205835" description="Nicotinate phosphoribosyltransferase">
    <location>
        <begin position="1"/>
        <end position="404"/>
    </location>
</feature>
<feature type="modified residue" description="Phosphohistidine; by autocatalysis" evidence="1">
    <location>
        <position position="224"/>
    </location>
</feature>
<evidence type="ECO:0000255" key="1">
    <source>
        <dbReference type="HAMAP-Rule" id="MF_00570"/>
    </source>
</evidence>
<proteinExistence type="inferred from homology"/>
<organism>
    <name type="scientific">Photorhabdus laumondii subsp. laumondii (strain DSM 15139 / CIP 105565 / TT01)</name>
    <name type="common">Photorhabdus luminescens subsp. laumondii</name>
    <dbReference type="NCBI Taxonomy" id="243265"/>
    <lineage>
        <taxon>Bacteria</taxon>
        <taxon>Pseudomonadati</taxon>
        <taxon>Pseudomonadota</taxon>
        <taxon>Gammaproteobacteria</taxon>
        <taxon>Enterobacterales</taxon>
        <taxon>Morganellaceae</taxon>
        <taxon>Photorhabdus</taxon>
    </lineage>
</organism>
<accession>Q7N621</accession>
<name>PNCB_PHOLL</name>
<reference key="1">
    <citation type="journal article" date="2003" name="Nat. Biotechnol.">
        <title>The genome sequence of the entomopathogenic bacterium Photorhabdus luminescens.</title>
        <authorList>
            <person name="Duchaud E."/>
            <person name="Rusniok C."/>
            <person name="Frangeul L."/>
            <person name="Buchrieser C."/>
            <person name="Givaudan A."/>
            <person name="Taourit S."/>
            <person name="Bocs S."/>
            <person name="Boursaux-Eude C."/>
            <person name="Chandler M."/>
            <person name="Charles J.-F."/>
            <person name="Dassa E."/>
            <person name="Derose R."/>
            <person name="Derzelle S."/>
            <person name="Freyssinet G."/>
            <person name="Gaudriault S."/>
            <person name="Medigue C."/>
            <person name="Lanois A."/>
            <person name="Powell K."/>
            <person name="Siguier P."/>
            <person name="Vincent R."/>
            <person name="Wingate V."/>
            <person name="Zouine M."/>
            <person name="Glaser P."/>
            <person name="Boemare N."/>
            <person name="Danchin A."/>
            <person name="Kunst F."/>
        </authorList>
    </citation>
    <scope>NUCLEOTIDE SEQUENCE [LARGE SCALE GENOMIC DNA]</scope>
    <source>
        <strain>DSM 15139 / CIP 105565 / TT01</strain>
    </source>
</reference>